<accession>Q7UCW4</accession>
<accession>Q83LH8</accession>
<sequence length="341" mass="37602">MGPVMLDVEGYELDAEEREILAHPLVGGLILFTRNYHDPAQLRELVRQIRAASRNHLVVAVDQEGGRVQRFREGFTRLPAAQSFAALLGMEEGGKLAQEAGWLMASEMIAMDIDISFAPVLDVGHISAAIGERSYHADPQKALAIASRFIDGMHEAGMKTTGKHFPGHGAVTADSHKETPCDPRPQAEIRAKDMSVFSSLIRENKLDAIMPAHVIYSDVDPRPASGSPYWLKTVLRQELGFDGVIFSDDLSMEGAAIMGSYAERGQASLDAGCDMILVCNNRKGAVSVLDNLSPIKAERVTRLYHKGSFSRQELMDSARWKAISTRLNQLHERWQEEKAGH</sequence>
<proteinExistence type="inferred from homology"/>
<comment type="function">
    <text evidence="1">Plays a role in peptidoglycan recycling by cleaving the terminal beta-1,4-linked N-acetylglucosamine (GlcNAc) from peptide-linked peptidoglycan fragments, giving rise to free GlcNAc, anhydro-N-acetylmuramic acid and anhydro-N-acetylmuramic acid-linked peptides.</text>
</comment>
<comment type="catalytic activity">
    <reaction evidence="1">
        <text>Hydrolysis of terminal non-reducing N-acetyl-D-hexosamine residues in N-acetyl-beta-D-hexosaminides.</text>
        <dbReference type="EC" id="3.2.1.52"/>
    </reaction>
</comment>
<comment type="pathway">
    <text evidence="1">Cell wall biogenesis; peptidoglycan recycling.</text>
</comment>
<comment type="subcellular location">
    <subcellularLocation>
        <location evidence="1">Cytoplasm</location>
    </subcellularLocation>
</comment>
<comment type="similarity">
    <text evidence="1">Belongs to the glycosyl hydrolase 3 family. NagZ subfamily.</text>
</comment>
<name>NAGZ_SHIFL</name>
<reference key="1">
    <citation type="journal article" date="2003" name="Infect. Immun.">
        <title>Complete genome sequence and comparative genomics of Shigella flexneri serotype 2a strain 2457T.</title>
        <authorList>
            <person name="Wei J."/>
            <person name="Goldberg M.B."/>
            <person name="Burland V."/>
            <person name="Venkatesan M.M."/>
            <person name="Deng W."/>
            <person name="Fournier G."/>
            <person name="Mayhew G.F."/>
            <person name="Plunkett G. III"/>
            <person name="Rose D.J."/>
            <person name="Darling A."/>
            <person name="Mau B."/>
            <person name="Perna N.T."/>
            <person name="Payne S.M."/>
            <person name="Runyen-Janecky L.J."/>
            <person name="Zhou S."/>
            <person name="Schwartz D.C."/>
            <person name="Blattner F.R."/>
        </authorList>
    </citation>
    <scope>NUCLEOTIDE SEQUENCE [LARGE SCALE GENOMIC DNA]</scope>
    <source>
        <strain>ATCC 700930 / 2457T / Serotype 2a</strain>
    </source>
</reference>
<reference key="2">
    <citation type="journal article" date="2002" name="Nucleic Acids Res.">
        <title>Genome sequence of Shigella flexneri 2a: insights into pathogenicity through comparison with genomes of Escherichia coli K12 and O157.</title>
        <authorList>
            <person name="Jin Q."/>
            <person name="Yuan Z."/>
            <person name="Xu J."/>
            <person name="Wang Y."/>
            <person name="Shen Y."/>
            <person name="Lu W."/>
            <person name="Wang J."/>
            <person name="Liu H."/>
            <person name="Yang J."/>
            <person name="Yang F."/>
            <person name="Zhang X."/>
            <person name="Zhang J."/>
            <person name="Yang G."/>
            <person name="Wu H."/>
            <person name="Qu D."/>
            <person name="Dong J."/>
            <person name="Sun L."/>
            <person name="Xue Y."/>
            <person name="Zhao A."/>
            <person name="Gao Y."/>
            <person name="Zhu J."/>
            <person name="Kan B."/>
            <person name="Ding K."/>
            <person name="Chen S."/>
            <person name="Cheng H."/>
            <person name="Yao Z."/>
            <person name="He B."/>
            <person name="Chen R."/>
            <person name="Ma D."/>
            <person name="Qiang B."/>
            <person name="Wen Y."/>
            <person name="Hou Y."/>
            <person name="Yu J."/>
        </authorList>
    </citation>
    <scope>NUCLEOTIDE SEQUENCE [LARGE SCALE GENOMIC DNA]</scope>
    <source>
        <strain>301 / Serotype 2a</strain>
    </source>
</reference>
<keyword id="KW-0131">Cell cycle</keyword>
<keyword id="KW-0132">Cell division</keyword>
<keyword id="KW-0133">Cell shape</keyword>
<keyword id="KW-0961">Cell wall biogenesis/degradation</keyword>
<keyword id="KW-0963">Cytoplasm</keyword>
<keyword id="KW-0326">Glycosidase</keyword>
<keyword id="KW-0378">Hydrolase</keyword>
<keyword id="KW-0573">Peptidoglycan synthesis</keyword>
<keyword id="KW-1185">Reference proteome</keyword>
<dbReference type="EC" id="3.2.1.52" evidence="1"/>
<dbReference type="EMBL" id="AE014073">
    <property type="protein sequence ID" value="AAP16617.1"/>
    <property type="molecule type" value="Genomic_DNA"/>
</dbReference>
<dbReference type="EMBL" id="AE005674">
    <property type="protein sequence ID" value="AAN42729.1"/>
    <property type="molecule type" value="Genomic_DNA"/>
</dbReference>
<dbReference type="RefSeq" id="WP_000529300.1">
    <property type="nucleotide sequence ID" value="NZ_WHSI01000003.1"/>
</dbReference>
<dbReference type="SMR" id="Q7UCW4"/>
<dbReference type="STRING" id="198214.SF1111"/>
<dbReference type="PaxDb" id="198214-SF1111"/>
<dbReference type="KEGG" id="sfl:SF1111"/>
<dbReference type="KEGG" id="sfx:S1191"/>
<dbReference type="PATRIC" id="fig|198214.7.peg.1301"/>
<dbReference type="HOGENOM" id="CLU_008392_0_0_6"/>
<dbReference type="UniPathway" id="UPA00544"/>
<dbReference type="Proteomes" id="UP000001006">
    <property type="component" value="Chromosome"/>
</dbReference>
<dbReference type="Proteomes" id="UP000002673">
    <property type="component" value="Chromosome"/>
</dbReference>
<dbReference type="GO" id="GO:0005737">
    <property type="term" value="C:cytoplasm"/>
    <property type="evidence" value="ECO:0007669"/>
    <property type="project" value="UniProtKB-SubCell"/>
</dbReference>
<dbReference type="GO" id="GO:0004563">
    <property type="term" value="F:beta-N-acetylhexosaminidase activity"/>
    <property type="evidence" value="ECO:0007669"/>
    <property type="project" value="UniProtKB-UniRule"/>
</dbReference>
<dbReference type="GO" id="GO:0005975">
    <property type="term" value="P:carbohydrate metabolic process"/>
    <property type="evidence" value="ECO:0007669"/>
    <property type="project" value="InterPro"/>
</dbReference>
<dbReference type="GO" id="GO:0051301">
    <property type="term" value="P:cell division"/>
    <property type="evidence" value="ECO:0007669"/>
    <property type="project" value="UniProtKB-KW"/>
</dbReference>
<dbReference type="GO" id="GO:0071555">
    <property type="term" value="P:cell wall organization"/>
    <property type="evidence" value="ECO:0007669"/>
    <property type="project" value="UniProtKB-KW"/>
</dbReference>
<dbReference type="GO" id="GO:0009252">
    <property type="term" value="P:peptidoglycan biosynthetic process"/>
    <property type="evidence" value="ECO:0007669"/>
    <property type="project" value="UniProtKB-KW"/>
</dbReference>
<dbReference type="GO" id="GO:0009254">
    <property type="term" value="P:peptidoglycan turnover"/>
    <property type="evidence" value="ECO:0007669"/>
    <property type="project" value="UniProtKB-UniRule"/>
</dbReference>
<dbReference type="GO" id="GO:0008360">
    <property type="term" value="P:regulation of cell shape"/>
    <property type="evidence" value="ECO:0007669"/>
    <property type="project" value="UniProtKB-KW"/>
</dbReference>
<dbReference type="FunFam" id="3.20.20.300:FF:000001">
    <property type="entry name" value="Beta-hexosaminidase"/>
    <property type="match status" value="1"/>
</dbReference>
<dbReference type="Gene3D" id="3.20.20.300">
    <property type="entry name" value="Glycoside hydrolase, family 3, N-terminal domain"/>
    <property type="match status" value="1"/>
</dbReference>
<dbReference type="HAMAP" id="MF_00364">
    <property type="entry name" value="NagZ"/>
    <property type="match status" value="1"/>
</dbReference>
<dbReference type="InterPro" id="IPR022956">
    <property type="entry name" value="Beta_hexosaminidase_bac"/>
</dbReference>
<dbReference type="InterPro" id="IPR019800">
    <property type="entry name" value="Glyco_hydro_3_AS"/>
</dbReference>
<dbReference type="InterPro" id="IPR001764">
    <property type="entry name" value="Glyco_hydro_3_N"/>
</dbReference>
<dbReference type="InterPro" id="IPR036962">
    <property type="entry name" value="Glyco_hydro_3_N_sf"/>
</dbReference>
<dbReference type="InterPro" id="IPR017853">
    <property type="entry name" value="Glycoside_hydrolase_SF"/>
</dbReference>
<dbReference type="InterPro" id="IPR050226">
    <property type="entry name" value="NagZ_Beta-hexosaminidase"/>
</dbReference>
<dbReference type="NCBIfam" id="NF003740">
    <property type="entry name" value="PRK05337.1"/>
    <property type="match status" value="1"/>
</dbReference>
<dbReference type="PANTHER" id="PTHR30480:SF13">
    <property type="entry name" value="BETA-HEXOSAMINIDASE"/>
    <property type="match status" value="1"/>
</dbReference>
<dbReference type="PANTHER" id="PTHR30480">
    <property type="entry name" value="BETA-HEXOSAMINIDASE-RELATED"/>
    <property type="match status" value="1"/>
</dbReference>
<dbReference type="Pfam" id="PF00933">
    <property type="entry name" value="Glyco_hydro_3"/>
    <property type="match status" value="1"/>
</dbReference>
<dbReference type="SUPFAM" id="SSF51445">
    <property type="entry name" value="(Trans)glycosidases"/>
    <property type="match status" value="1"/>
</dbReference>
<dbReference type="PROSITE" id="PS00775">
    <property type="entry name" value="GLYCOSYL_HYDROL_F3"/>
    <property type="match status" value="1"/>
</dbReference>
<organism>
    <name type="scientific">Shigella flexneri</name>
    <dbReference type="NCBI Taxonomy" id="623"/>
    <lineage>
        <taxon>Bacteria</taxon>
        <taxon>Pseudomonadati</taxon>
        <taxon>Pseudomonadota</taxon>
        <taxon>Gammaproteobacteria</taxon>
        <taxon>Enterobacterales</taxon>
        <taxon>Enterobacteriaceae</taxon>
        <taxon>Shigella</taxon>
    </lineage>
</organism>
<protein>
    <recommendedName>
        <fullName evidence="1">Beta-hexosaminidase</fullName>
        <ecNumber evidence="1">3.2.1.52</ecNumber>
    </recommendedName>
    <alternativeName>
        <fullName evidence="1">Beta-N-acetylhexosaminidase</fullName>
    </alternativeName>
    <alternativeName>
        <fullName evidence="1">N-acetyl-beta-glucosaminidase</fullName>
    </alternativeName>
</protein>
<feature type="chain" id="PRO_0000210799" description="Beta-hexosaminidase">
    <location>
        <begin position="1"/>
        <end position="341"/>
    </location>
</feature>
<feature type="active site" description="Proton donor/acceptor" evidence="1">
    <location>
        <position position="176"/>
    </location>
</feature>
<feature type="active site" description="Nucleophile" evidence="1">
    <location>
        <position position="248"/>
    </location>
</feature>
<feature type="binding site" evidence="1">
    <location>
        <position position="62"/>
    </location>
    <ligand>
        <name>substrate</name>
    </ligand>
</feature>
<feature type="binding site" evidence="1">
    <location>
        <position position="70"/>
    </location>
    <ligand>
        <name>substrate</name>
    </ligand>
</feature>
<feature type="binding site" evidence="1">
    <location>
        <position position="133"/>
    </location>
    <ligand>
        <name>substrate</name>
    </ligand>
</feature>
<feature type="binding site" evidence="1">
    <location>
        <begin position="163"/>
        <end position="164"/>
    </location>
    <ligand>
        <name>substrate</name>
    </ligand>
</feature>
<feature type="site" description="Important for catalytic activity" evidence="1">
    <location>
        <position position="174"/>
    </location>
</feature>
<gene>
    <name evidence="1" type="primary">nagZ</name>
    <name type="ordered locus">SF1111</name>
    <name type="ordered locus">S1191</name>
</gene>
<evidence type="ECO:0000255" key="1">
    <source>
        <dbReference type="HAMAP-Rule" id="MF_00364"/>
    </source>
</evidence>